<keyword id="KW-0046">Antibiotic resistance</keyword>
<keyword id="KW-1003">Cell membrane</keyword>
<keyword id="KW-0133">Cell shape</keyword>
<keyword id="KW-0961">Cell wall biogenesis/degradation</keyword>
<keyword id="KW-0378">Hydrolase</keyword>
<keyword id="KW-0472">Membrane</keyword>
<keyword id="KW-0573">Peptidoglycan synthesis</keyword>
<keyword id="KW-1185">Reference proteome</keyword>
<keyword id="KW-0812">Transmembrane</keyword>
<keyword id="KW-1133">Transmembrane helix</keyword>
<feature type="chain" id="PRO_0000151143" description="Undecaprenyl-diphosphatase">
    <location>
        <begin position="1"/>
        <end position="274"/>
    </location>
</feature>
<feature type="transmembrane region" description="Helical" evidence="1">
    <location>
        <begin position="1"/>
        <end position="21"/>
    </location>
</feature>
<feature type="transmembrane region" description="Helical" evidence="1">
    <location>
        <begin position="42"/>
        <end position="62"/>
    </location>
</feature>
<feature type="transmembrane region" description="Helical" evidence="1">
    <location>
        <begin position="81"/>
        <end position="101"/>
    </location>
</feature>
<feature type="transmembrane region" description="Helical" evidence="1">
    <location>
        <begin position="107"/>
        <end position="127"/>
    </location>
</feature>
<feature type="transmembrane region" description="Helical" evidence="1">
    <location>
        <begin position="142"/>
        <end position="162"/>
    </location>
</feature>
<feature type="transmembrane region" description="Helical" evidence="1">
    <location>
        <begin position="184"/>
        <end position="204"/>
    </location>
</feature>
<feature type="transmembrane region" description="Helical" evidence="1">
    <location>
        <begin position="213"/>
        <end position="233"/>
    </location>
</feature>
<feature type="transmembrane region" description="Helical" evidence="1">
    <location>
        <begin position="248"/>
        <end position="268"/>
    </location>
</feature>
<comment type="function">
    <text evidence="1">Catalyzes the dephosphorylation of undecaprenyl diphosphate (UPP). Confers resistance to bacitracin.</text>
</comment>
<comment type="catalytic activity">
    <reaction evidence="1">
        <text>di-trans,octa-cis-undecaprenyl diphosphate + H2O = di-trans,octa-cis-undecaprenyl phosphate + phosphate + H(+)</text>
        <dbReference type="Rhea" id="RHEA:28094"/>
        <dbReference type="ChEBI" id="CHEBI:15377"/>
        <dbReference type="ChEBI" id="CHEBI:15378"/>
        <dbReference type="ChEBI" id="CHEBI:43474"/>
        <dbReference type="ChEBI" id="CHEBI:58405"/>
        <dbReference type="ChEBI" id="CHEBI:60392"/>
        <dbReference type="EC" id="3.6.1.27"/>
    </reaction>
</comment>
<comment type="subcellular location">
    <subcellularLocation>
        <location evidence="1">Cell membrane</location>
        <topology evidence="1">Multi-pass membrane protein</topology>
    </subcellularLocation>
</comment>
<comment type="miscellaneous">
    <text>Bacitracin is thought to be involved in the inhibition of peptidoglycan synthesis by sequestering undecaprenyl diphosphate, thereby reducing the pool of lipid carrier available.</text>
</comment>
<comment type="similarity">
    <text evidence="1">Belongs to the UppP family.</text>
</comment>
<organism>
    <name type="scientific">Deinococcus radiodurans (strain ATCC 13939 / DSM 20539 / JCM 16871 / CCUG 27074 / LMG 4051 / NBRC 15346 / NCIMB 9279 / VKM B-1422 / R1)</name>
    <dbReference type="NCBI Taxonomy" id="243230"/>
    <lineage>
        <taxon>Bacteria</taxon>
        <taxon>Thermotogati</taxon>
        <taxon>Deinococcota</taxon>
        <taxon>Deinococci</taxon>
        <taxon>Deinococcales</taxon>
        <taxon>Deinococcaceae</taxon>
        <taxon>Deinococcus</taxon>
    </lineage>
</organism>
<name>UPPP_DEIRA</name>
<sequence>MDWLYSLIYGIVEGITEFLPISSTGHLILTGNLLHVPWPKEVKDTFEVVIQGGAILAVLVYYWRDFLKIRHIGHDRGQQRLWLGVVLACIPAVILGVLFGDTIKAYLFRPSVVAWALIVGGVLMWLLESRKATPDTHDIENISAGKALAIGAAQCLALLWPGFSRSASSILGGMLLGLDRPTATKFSFYLGVPTLGGAALLDFIKSREILAQIGVVNVAIGAVTSFVVAYFAIGWLLRFVSTNNFKGFAVYRVVVGVLILVLIARGVLQNGSLA</sequence>
<protein>
    <recommendedName>
        <fullName evidence="1">Undecaprenyl-diphosphatase</fullName>
        <ecNumber evidence="1">3.6.1.27</ecNumber>
    </recommendedName>
    <alternativeName>
        <fullName evidence="1">Bacitracin resistance protein</fullName>
    </alternativeName>
    <alternativeName>
        <fullName evidence="1">Undecaprenyl pyrophosphate phosphatase</fullName>
    </alternativeName>
</protein>
<accession>Q9RX61</accession>
<gene>
    <name evidence="1" type="primary">uppP</name>
    <name type="synonym">bacA</name>
    <name type="synonym">upk</name>
    <name type="ordered locus">DR_0454</name>
</gene>
<evidence type="ECO:0000255" key="1">
    <source>
        <dbReference type="HAMAP-Rule" id="MF_01006"/>
    </source>
</evidence>
<reference key="1">
    <citation type="journal article" date="1999" name="Science">
        <title>Genome sequence of the radioresistant bacterium Deinococcus radiodurans R1.</title>
        <authorList>
            <person name="White O."/>
            <person name="Eisen J.A."/>
            <person name="Heidelberg J.F."/>
            <person name="Hickey E.K."/>
            <person name="Peterson J.D."/>
            <person name="Dodson R.J."/>
            <person name="Haft D.H."/>
            <person name="Gwinn M.L."/>
            <person name="Nelson W.C."/>
            <person name="Richardson D.L."/>
            <person name="Moffat K.S."/>
            <person name="Qin H."/>
            <person name="Jiang L."/>
            <person name="Pamphile W."/>
            <person name="Crosby M."/>
            <person name="Shen M."/>
            <person name="Vamathevan J.J."/>
            <person name="Lam P."/>
            <person name="McDonald L.A."/>
            <person name="Utterback T.R."/>
            <person name="Zalewski C."/>
            <person name="Makarova K.S."/>
            <person name="Aravind L."/>
            <person name="Daly M.J."/>
            <person name="Minton K.W."/>
            <person name="Fleischmann R.D."/>
            <person name="Ketchum K.A."/>
            <person name="Nelson K.E."/>
            <person name="Salzberg S.L."/>
            <person name="Smith H.O."/>
            <person name="Venter J.C."/>
            <person name="Fraser C.M."/>
        </authorList>
    </citation>
    <scope>NUCLEOTIDE SEQUENCE [LARGE SCALE GENOMIC DNA]</scope>
    <source>
        <strain>ATCC 13939 / DSM 20539 / JCM 16871 / CCUG 27074 / LMG 4051 / NBRC 15346 / NCIMB 9279 / VKM B-1422 / R1</strain>
    </source>
</reference>
<dbReference type="EC" id="3.6.1.27" evidence="1"/>
<dbReference type="EMBL" id="AE000513">
    <property type="protein sequence ID" value="AAF10030.1"/>
    <property type="molecule type" value="Genomic_DNA"/>
</dbReference>
<dbReference type="PIR" id="B75518">
    <property type="entry name" value="B75518"/>
</dbReference>
<dbReference type="RefSeq" id="NP_294177.1">
    <property type="nucleotide sequence ID" value="NC_001263.1"/>
</dbReference>
<dbReference type="RefSeq" id="WP_010887099.1">
    <property type="nucleotide sequence ID" value="NC_001263.1"/>
</dbReference>
<dbReference type="SMR" id="Q9RX61"/>
<dbReference type="FunCoup" id="Q9RX61">
    <property type="interactions" value="299"/>
</dbReference>
<dbReference type="STRING" id="243230.DR_0454"/>
<dbReference type="PaxDb" id="243230-DR_0454"/>
<dbReference type="EnsemblBacteria" id="AAF10030">
    <property type="protein sequence ID" value="AAF10030"/>
    <property type="gene ID" value="DR_0454"/>
</dbReference>
<dbReference type="GeneID" id="69516687"/>
<dbReference type="KEGG" id="dra:DR_0454"/>
<dbReference type="PATRIC" id="fig|243230.17.peg.630"/>
<dbReference type="eggNOG" id="COG1968">
    <property type="taxonomic scope" value="Bacteria"/>
</dbReference>
<dbReference type="HOGENOM" id="CLU_060296_2_0_0"/>
<dbReference type="InParanoid" id="Q9RX61"/>
<dbReference type="OrthoDB" id="9808289at2"/>
<dbReference type="Proteomes" id="UP000002524">
    <property type="component" value="Chromosome 1"/>
</dbReference>
<dbReference type="GO" id="GO:0005886">
    <property type="term" value="C:plasma membrane"/>
    <property type="evidence" value="ECO:0000318"/>
    <property type="project" value="GO_Central"/>
</dbReference>
<dbReference type="GO" id="GO:0050380">
    <property type="term" value="F:undecaprenyl-diphosphatase activity"/>
    <property type="evidence" value="ECO:0000318"/>
    <property type="project" value="GO_Central"/>
</dbReference>
<dbReference type="GO" id="GO:0071555">
    <property type="term" value="P:cell wall organization"/>
    <property type="evidence" value="ECO:0007669"/>
    <property type="project" value="UniProtKB-KW"/>
</dbReference>
<dbReference type="GO" id="GO:0009252">
    <property type="term" value="P:peptidoglycan biosynthetic process"/>
    <property type="evidence" value="ECO:0007669"/>
    <property type="project" value="UniProtKB-KW"/>
</dbReference>
<dbReference type="GO" id="GO:0000270">
    <property type="term" value="P:peptidoglycan metabolic process"/>
    <property type="evidence" value="ECO:0000318"/>
    <property type="project" value="GO_Central"/>
</dbReference>
<dbReference type="GO" id="GO:0008360">
    <property type="term" value="P:regulation of cell shape"/>
    <property type="evidence" value="ECO:0007669"/>
    <property type="project" value="UniProtKB-KW"/>
</dbReference>
<dbReference type="GO" id="GO:0046677">
    <property type="term" value="P:response to antibiotic"/>
    <property type="evidence" value="ECO:0007669"/>
    <property type="project" value="UniProtKB-UniRule"/>
</dbReference>
<dbReference type="HAMAP" id="MF_01006">
    <property type="entry name" value="Undec_diphosphatase"/>
    <property type="match status" value="1"/>
</dbReference>
<dbReference type="InterPro" id="IPR003824">
    <property type="entry name" value="UppP"/>
</dbReference>
<dbReference type="NCBIfam" id="NF001389">
    <property type="entry name" value="PRK00281.1-2"/>
    <property type="match status" value="1"/>
</dbReference>
<dbReference type="NCBIfam" id="NF001390">
    <property type="entry name" value="PRK00281.1-4"/>
    <property type="match status" value="1"/>
</dbReference>
<dbReference type="NCBIfam" id="TIGR00753">
    <property type="entry name" value="undec_PP_bacA"/>
    <property type="match status" value="1"/>
</dbReference>
<dbReference type="PANTHER" id="PTHR30622">
    <property type="entry name" value="UNDECAPRENYL-DIPHOSPHATASE"/>
    <property type="match status" value="1"/>
</dbReference>
<dbReference type="PANTHER" id="PTHR30622:SF3">
    <property type="entry name" value="UNDECAPRENYL-DIPHOSPHATASE"/>
    <property type="match status" value="1"/>
</dbReference>
<dbReference type="Pfam" id="PF02673">
    <property type="entry name" value="BacA"/>
    <property type="match status" value="1"/>
</dbReference>
<proteinExistence type="inferred from homology"/>